<protein>
    <recommendedName>
        <fullName>Nucleoside diphosphate kinase homolog 5</fullName>
        <shortName>NDK-H 5</shortName>
        <shortName>NDP kinase homolog 5</shortName>
    </recommendedName>
    <alternativeName>
        <fullName evidence="8">3'-5' exonuclease NME5</fullName>
        <ecNumber evidence="1">3.1.-.-</ecNumber>
    </alternativeName>
    <alternativeName>
        <fullName evidence="7">Rsph23</fullName>
    </alternativeName>
    <alternativeName>
        <fullName>nm23-M5</fullName>
    </alternativeName>
</protein>
<evidence type="ECO:0000250" key="1">
    <source>
        <dbReference type="UniProtKB" id="P56597"/>
    </source>
</evidence>
<evidence type="ECO:0000269" key="2">
    <source>
    </source>
</evidence>
<evidence type="ECO:0000269" key="3">
    <source>
    </source>
</evidence>
<evidence type="ECO:0000269" key="4">
    <source>
    </source>
</evidence>
<evidence type="ECO:0000303" key="5">
    <source>
    </source>
</evidence>
<evidence type="ECO:0000303" key="6">
    <source>
    </source>
</evidence>
<evidence type="ECO:0000303" key="7">
    <source>
    </source>
</evidence>
<evidence type="ECO:0000305" key="8"/>
<evidence type="ECO:0000305" key="9">
    <source>
    </source>
</evidence>
<sequence>MEVSMPLPQIYVEKTLALIKPDVVDKEEEIQDIILGSGFTIIQRRKLHLSPEHCSNFYVEQYGKMFFPNLTAYMSSGPLVAMILARHKAISYWKELMGPSNSLVAKETHPDSLRAIYGTDELRNALHGSNDFAASEREIRFMFPAVIIEPIPIGQAAKDYINLYVAPTLLQGLTELCKEKPPDPYLWLADWLMKNNPNKPKLCHFPVTEEP</sequence>
<reference key="1">
    <citation type="journal article" date="2003" name="Biochem. Biophys. Res. Commun.">
        <title>Cloning, sequencing, and characterization of the murine nm23-M5 gene during mouse spermatogenesis and spermiogenesis.</title>
        <authorList>
            <person name="Hwang K.-C."/>
            <person name="Ok D.-W."/>
            <person name="Hong J.-C."/>
            <person name="Kim M.-O."/>
            <person name="Kim J.-H."/>
        </authorList>
    </citation>
    <scope>NUCLEOTIDE SEQUENCE [MRNA] (ISOFORMS 1 AND 2)</scope>
    <scope>FUNCTION</scope>
    <scope>TISSUE SPECIFICITY</scope>
    <scope>DEVELOPMENTAL STAGE</scope>
    <source>
        <strain>ICR</strain>
        <tissue>Testis</tissue>
    </source>
</reference>
<reference key="2">
    <citation type="journal article" date="2004" name="Genome Res.">
        <title>The status, quality, and expansion of the NIH full-length cDNA project: the Mammalian Gene Collection (MGC).</title>
        <authorList>
            <consortium name="The MGC Project Team"/>
        </authorList>
    </citation>
    <scope>NUCLEOTIDE SEQUENCE [LARGE SCALE MRNA] (ISOFORM 2)</scope>
    <source>
        <tissue>Testis</tissue>
    </source>
</reference>
<reference key="3">
    <citation type="journal article" date="2010" name="Cell">
        <title>A tissue-specific atlas of mouse protein phosphorylation and expression.</title>
        <authorList>
            <person name="Huttlin E.L."/>
            <person name="Jedrychowski M.P."/>
            <person name="Elias J.E."/>
            <person name="Goswami T."/>
            <person name="Rad R."/>
            <person name="Beausoleil S.A."/>
            <person name="Villen J."/>
            <person name="Haas W."/>
            <person name="Sowa M.E."/>
            <person name="Gygi S.P."/>
        </authorList>
    </citation>
    <scope>IDENTIFICATION BY MASS SPECTROMETRY [LARGE SCALE ANALYSIS]</scope>
    <source>
        <tissue>Testis</tissue>
    </source>
</reference>
<reference key="4">
    <citation type="journal article" date="2020" name="PLoS Genet.">
        <title>Rsph4a is essential for the triplet radial spoke head assembly of the mouse motile cilia.</title>
        <authorList>
            <person name="Yoke H."/>
            <person name="Ueno H."/>
            <person name="Narita A."/>
            <person name="Sakai T."/>
            <person name="Horiuchi K."/>
            <person name="Shingyoji C."/>
            <person name="Hamada H."/>
            <person name="Shinohara K."/>
        </authorList>
    </citation>
    <scope>SUBCELLULAR LOCATION</scope>
    <scope>TISSUE SPECIFICITY</scope>
</reference>
<reference key="5">
    <citation type="journal article" date="2022" name="Cell Rep.">
        <title>Differential requirements of IQUB for the assembly of radial spoke 1 and the motility of mouse cilia and flagella.</title>
        <authorList>
            <person name="Zhang X."/>
            <person name="Xiao Z."/>
            <person name="Zhang J."/>
            <person name="Xu C."/>
            <person name="Liu S."/>
            <person name="Cheng L."/>
            <person name="Zhou S."/>
            <person name="Zhao S."/>
            <person name="Zhang Y."/>
            <person name="Wu J."/>
            <person name="Wang Y."/>
            <person name="Liu M."/>
        </authorList>
    </citation>
    <scope>FUNCTION</scope>
    <scope>IDENTIFICATION IN RADIAL SPOKE COMPLEX 1</scope>
    <scope>INTERACTION WITH IQUB</scope>
    <scope>IDENTIFICATION BY MASS SPECTROMETRY</scope>
    <scope>SUBCELLULAR LOCATION</scope>
</reference>
<dbReference type="EC" id="3.1.-.-" evidence="1"/>
<dbReference type="EMBL" id="AF343565">
    <property type="protein sequence ID" value="AAK20866.1"/>
    <property type="molecule type" value="mRNA"/>
</dbReference>
<dbReference type="EMBL" id="BC049625">
    <property type="protein sequence ID" value="AAH49625.1"/>
    <property type="molecule type" value="mRNA"/>
</dbReference>
<dbReference type="CCDS" id="CCDS29130.1">
    <molecule id="Q99MH5-1"/>
</dbReference>
<dbReference type="RefSeq" id="NP_542368.2">
    <molecule id="Q99MH5-1"/>
    <property type="nucleotide sequence ID" value="NM_080637.4"/>
</dbReference>
<dbReference type="RefSeq" id="XP_017173493.1">
    <property type="nucleotide sequence ID" value="XM_017318004.1"/>
</dbReference>
<dbReference type="PDB" id="8WZB">
    <property type="method" value="EM"/>
    <property type="resolution" value="3.28 A"/>
    <property type="chains" value="E=1-211"/>
</dbReference>
<dbReference type="PDB" id="8X2U">
    <property type="method" value="EM"/>
    <property type="resolution" value="3.57 A"/>
    <property type="chains" value="E/M=1-211"/>
</dbReference>
<dbReference type="PDBsum" id="8WZB"/>
<dbReference type="PDBsum" id="8X2U"/>
<dbReference type="EMDB" id="EMD-37949"/>
<dbReference type="EMDB" id="EMD-38020"/>
<dbReference type="SMR" id="Q99MH5"/>
<dbReference type="ComplexPortal" id="CPX-8161">
    <property type="entry name" value="Radial spoke complex, ciliiar variant"/>
</dbReference>
<dbReference type="ComplexPortal" id="CPX-8162">
    <property type="entry name" value="Radial spoke complex, flagellar variant"/>
</dbReference>
<dbReference type="FunCoup" id="Q99MH5">
    <property type="interactions" value="137"/>
</dbReference>
<dbReference type="STRING" id="10090.ENSMUSP00000078269"/>
<dbReference type="PhosphoSitePlus" id="Q99MH5"/>
<dbReference type="SwissPalm" id="Q99MH5"/>
<dbReference type="PaxDb" id="10090-ENSMUSP00000078269"/>
<dbReference type="ProteomicsDB" id="252931">
    <molecule id="Q99MH5-1"/>
</dbReference>
<dbReference type="ProteomicsDB" id="252932">
    <molecule id="Q99MH5-2"/>
</dbReference>
<dbReference type="Antibodypedia" id="26568">
    <property type="antibodies" value="184 antibodies from 26 providers"/>
</dbReference>
<dbReference type="DNASU" id="75533"/>
<dbReference type="Ensembl" id="ENSMUST00000079287.12">
    <molecule id="Q99MH5-1"/>
    <property type="protein sequence ID" value="ENSMUSP00000078269.6"/>
    <property type="gene ID" value="ENSMUSG00000035984.15"/>
</dbReference>
<dbReference type="Ensembl" id="ENSMUST00000134875.8">
    <molecule id="Q99MH5-2"/>
    <property type="protein sequence ID" value="ENSMUSP00000118213.2"/>
    <property type="gene ID" value="ENSMUSG00000035984.15"/>
</dbReference>
<dbReference type="GeneID" id="75533"/>
<dbReference type="KEGG" id="mmu:75533"/>
<dbReference type="UCSC" id="uc008eks.1">
    <molecule id="Q99MH5-1"/>
    <property type="organism name" value="mouse"/>
</dbReference>
<dbReference type="AGR" id="MGI:1922783"/>
<dbReference type="CTD" id="8382"/>
<dbReference type="MGI" id="MGI:1922783">
    <property type="gene designation" value="Nme5"/>
</dbReference>
<dbReference type="VEuPathDB" id="HostDB:ENSMUSG00000035984"/>
<dbReference type="eggNOG" id="KOG0888">
    <property type="taxonomic scope" value="Eukaryota"/>
</dbReference>
<dbReference type="GeneTree" id="ENSGT00940000159595"/>
<dbReference type="HOGENOM" id="CLU_060216_8_3_1"/>
<dbReference type="InParanoid" id="Q99MH5"/>
<dbReference type="OMA" id="HNAISYW"/>
<dbReference type="OrthoDB" id="1729737at2759"/>
<dbReference type="PhylomeDB" id="Q99MH5"/>
<dbReference type="TreeFam" id="TF354225"/>
<dbReference type="BioGRID-ORCS" id="75533">
    <property type="hits" value="0 hits in 79 CRISPR screens"/>
</dbReference>
<dbReference type="ChiTaRS" id="Nme5">
    <property type="organism name" value="mouse"/>
</dbReference>
<dbReference type="PRO" id="PR:Q99MH5"/>
<dbReference type="Proteomes" id="UP000000589">
    <property type="component" value="Chromosome 18"/>
</dbReference>
<dbReference type="RNAct" id="Q99MH5">
    <property type="molecule type" value="protein"/>
</dbReference>
<dbReference type="Bgee" id="ENSMUSG00000035984">
    <property type="expression patterns" value="Expressed in spermatid and 195 other cell types or tissues"/>
</dbReference>
<dbReference type="ExpressionAtlas" id="Q99MH5">
    <property type="expression patterns" value="baseline and differential"/>
</dbReference>
<dbReference type="GO" id="GO:0097729">
    <property type="term" value="C:9+2 motile cilium"/>
    <property type="evidence" value="ECO:0000314"/>
    <property type="project" value="UniProtKB"/>
</dbReference>
<dbReference type="GO" id="GO:0005576">
    <property type="term" value="C:extracellular region"/>
    <property type="evidence" value="ECO:0007669"/>
    <property type="project" value="GOC"/>
</dbReference>
<dbReference type="GO" id="GO:0001534">
    <property type="term" value="C:radial spoke"/>
    <property type="evidence" value="ECO:0000314"/>
    <property type="project" value="UniProtKB"/>
</dbReference>
<dbReference type="GO" id="GO:0036126">
    <property type="term" value="C:sperm flagellum"/>
    <property type="evidence" value="ECO:0000314"/>
    <property type="project" value="MGI"/>
</dbReference>
<dbReference type="GO" id="GO:0008408">
    <property type="term" value="F:3'-5' exonuclease activity"/>
    <property type="evidence" value="ECO:0000250"/>
    <property type="project" value="UniProtKB"/>
</dbReference>
<dbReference type="GO" id="GO:0004550">
    <property type="term" value="F:nucleoside diphosphate kinase activity"/>
    <property type="evidence" value="ECO:0007669"/>
    <property type="project" value="InterPro"/>
</dbReference>
<dbReference type="GO" id="GO:0060271">
    <property type="term" value="P:cilium assembly"/>
    <property type="evidence" value="ECO:0000315"/>
    <property type="project" value="MGI"/>
</dbReference>
<dbReference type="GO" id="GO:0006241">
    <property type="term" value="P:CTP biosynthetic process"/>
    <property type="evidence" value="ECO:0007669"/>
    <property type="project" value="InterPro"/>
</dbReference>
<dbReference type="GO" id="GO:0003351">
    <property type="term" value="P:epithelial cilium movement involved in extracellular fluid movement"/>
    <property type="evidence" value="ECO:0000315"/>
    <property type="project" value="MGI"/>
</dbReference>
<dbReference type="GO" id="GO:0051649">
    <property type="term" value="P:establishment of localization in cell"/>
    <property type="evidence" value="ECO:0000315"/>
    <property type="project" value="MGI"/>
</dbReference>
<dbReference type="GO" id="GO:0030317">
    <property type="term" value="P:flagellated sperm motility"/>
    <property type="evidence" value="ECO:0000305"/>
    <property type="project" value="UniProtKB"/>
</dbReference>
<dbReference type="GO" id="GO:0006183">
    <property type="term" value="P:GTP biosynthetic process"/>
    <property type="evidence" value="ECO:0007669"/>
    <property type="project" value="InterPro"/>
</dbReference>
<dbReference type="GO" id="GO:0007618">
    <property type="term" value="P:mating"/>
    <property type="evidence" value="ECO:0000305"/>
    <property type="project" value="UniProtKB"/>
</dbReference>
<dbReference type="GO" id="GO:1902176">
    <property type="term" value="P:negative regulation of oxidative stress-induced intrinsic apoptotic signaling pathway"/>
    <property type="evidence" value="ECO:0000314"/>
    <property type="project" value="MGI"/>
</dbReference>
<dbReference type="GO" id="GO:0000302">
    <property type="term" value="P:response to reactive oxygen species"/>
    <property type="evidence" value="ECO:0000303"/>
    <property type="project" value="UniProtKB"/>
</dbReference>
<dbReference type="GO" id="GO:0007286">
    <property type="term" value="P:spermatid development"/>
    <property type="evidence" value="ECO:0000314"/>
    <property type="project" value="UniProtKB"/>
</dbReference>
<dbReference type="GO" id="GO:0006228">
    <property type="term" value="P:UTP biosynthetic process"/>
    <property type="evidence" value="ECO:0007669"/>
    <property type="project" value="InterPro"/>
</dbReference>
<dbReference type="GO" id="GO:0021591">
    <property type="term" value="P:ventricular system development"/>
    <property type="evidence" value="ECO:0000315"/>
    <property type="project" value="MGI"/>
</dbReference>
<dbReference type="CDD" id="cd22970">
    <property type="entry name" value="DD_NDKH5-like"/>
    <property type="match status" value="1"/>
</dbReference>
<dbReference type="CDD" id="cd04418">
    <property type="entry name" value="NDPk5"/>
    <property type="match status" value="1"/>
</dbReference>
<dbReference type="FunFam" id="1.20.890.10:FF:000008">
    <property type="entry name" value="Nucleoside diphosphate kinase homolog 5"/>
    <property type="match status" value="1"/>
</dbReference>
<dbReference type="FunFam" id="3.30.70.141:FF:000008">
    <property type="entry name" value="nucleoside diphosphate kinase homolog 5"/>
    <property type="match status" value="1"/>
</dbReference>
<dbReference type="Gene3D" id="1.20.890.10">
    <property type="entry name" value="cAMP-dependent protein kinase regulatory subunit, dimerization-anchoring domain"/>
    <property type="match status" value="1"/>
</dbReference>
<dbReference type="Gene3D" id="3.30.70.141">
    <property type="entry name" value="Nucleoside diphosphate kinase-like domain"/>
    <property type="match status" value="1"/>
</dbReference>
<dbReference type="InterPro" id="IPR007858">
    <property type="entry name" value="Dpy-30_motif"/>
</dbReference>
<dbReference type="InterPro" id="IPR034907">
    <property type="entry name" value="NDK-like_dom"/>
</dbReference>
<dbReference type="InterPro" id="IPR036850">
    <property type="entry name" value="NDK-like_dom_sf"/>
</dbReference>
<dbReference type="InterPro" id="IPR012410">
    <property type="entry name" value="NDK_H5"/>
</dbReference>
<dbReference type="InterPro" id="IPR001564">
    <property type="entry name" value="Nucleoside_diP_kinase"/>
</dbReference>
<dbReference type="PANTHER" id="PTHR46161">
    <property type="entry name" value="NUCLEOSIDE DIPHOSPHATE KINASE"/>
    <property type="match status" value="1"/>
</dbReference>
<dbReference type="PANTHER" id="PTHR46161:SF1">
    <property type="entry name" value="NUCLEOSIDE DIPHOSPHATE KINASE HOMOLOG 5"/>
    <property type="match status" value="1"/>
</dbReference>
<dbReference type="Pfam" id="PF05186">
    <property type="entry name" value="Dpy-30"/>
    <property type="match status" value="1"/>
</dbReference>
<dbReference type="Pfam" id="PF00334">
    <property type="entry name" value="NDK"/>
    <property type="match status" value="1"/>
</dbReference>
<dbReference type="PIRSF" id="PIRSF036504">
    <property type="entry name" value="NDK_H5"/>
    <property type="match status" value="1"/>
</dbReference>
<dbReference type="PRINTS" id="PR01243">
    <property type="entry name" value="NUCDPKINASE"/>
</dbReference>
<dbReference type="SMART" id="SM00562">
    <property type="entry name" value="NDK"/>
    <property type="match status" value="1"/>
</dbReference>
<dbReference type="SUPFAM" id="SSF54919">
    <property type="entry name" value="Nucleoside diphosphate kinase, NDK"/>
    <property type="match status" value="1"/>
</dbReference>
<dbReference type="PROSITE" id="PS51374">
    <property type="entry name" value="NDPK_LIKE"/>
    <property type="match status" value="1"/>
</dbReference>
<organism>
    <name type="scientific">Mus musculus</name>
    <name type="common">Mouse</name>
    <dbReference type="NCBI Taxonomy" id="10090"/>
    <lineage>
        <taxon>Eukaryota</taxon>
        <taxon>Metazoa</taxon>
        <taxon>Chordata</taxon>
        <taxon>Craniata</taxon>
        <taxon>Vertebrata</taxon>
        <taxon>Euteleostomi</taxon>
        <taxon>Mammalia</taxon>
        <taxon>Eutheria</taxon>
        <taxon>Euarchontoglires</taxon>
        <taxon>Glires</taxon>
        <taxon>Rodentia</taxon>
        <taxon>Myomorpha</taxon>
        <taxon>Muroidea</taxon>
        <taxon>Muridae</taxon>
        <taxon>Murinae</taxon>
        <taxon>Mus</taxon>
        <taxon>Mus</taxon>
    </lineage>
</organism>
<gene>
    <name type="primary">Nme5</name>
</gene>
<accession>Q99MH5</accession>
<accession>Q810R1</accession>
<name>NDK5_MOUSE</name>
<comment type="function">
    <text evidence="2 4">Functions as part of axonemal radial spoke complexes that play an important part in the motility of sperm and cilia (PubMed:36417862). Does not seem to have nucleoside diphosphate kinase (NDPK) activity. Confers protection from cell death by BAX and alters the cellular levels of several antioxidant enzymes including GPX5. May play a role in spermiogenesis by increasing the ability of late-stage spermatids to eliminate reactive oxygen species (PubMed:12788088).</text>
</comment>
<comment type="subunit">
    <text evidence="4">Component of the axonemal radial spoke complex 1 (RS1), at least composed of spoke head proteins RSPH1, RSPH3, RSPH9 and the cilia-specific component RSPH4A or sperm-specific component RSPH6A, spoke stalk proteins RSPH14, DNAJB13, DYDC1, ROPN1L and NME5, and the anchor protein IQUB (PubMed:36417862). Interacts with IQUB (PubMed:36417862).</text>
</comment>
<comment type="subcellular location">
    <subcellularLocation>
        <location evidence="3">Cell projection</location>
        <location evidence="3">Cilium</location>
    </subcellularLocation>
    <subcellularLocation>
        <location evidence="9">Cytoplasm</location>
        <location evidence="9">Cytoskeleton</location>
        <location evidence="9">Flagellum axoneme</location>
    </subcellularLocation>
</comment>
<comment type="alternative products">
    <event type="alternative splicing"/>
    <isoform>
        <id>Q99MH5-1</id>
        <name>1</name>
        <sequence type="displayed"/>
    </isoform>
    <isoform>
        <id>Q99MH5-2</id>
        <name>2</name>
        <sequence type="described" ref="VSP_007773 VSP_007774"/>
    </isoform>
    <text>Additional isoforms seem to exist.</text>
</comment>
<comment type="tissue specificity">
    <text evidence="2 3">Expressed in the trachea, ependymal cells and oviduct (at protein level) (PubMed:32203505). Expressed predominantly in germ cells of the testis. Not expressed in testicular somatic cells.</text>
</comment>
<comment type="developmental stage">
    <text evidence="2">First appears in pachytene spermatocytes and increases in abundance in subsequent stages.</text>
</comment>
<comment type="domain">
    <text evidence="1">Does not possess all residues considered to be crucial for the NDPK activity.</text>
</comment>
<comment type="similarity">
    <text evidence="8">Belongs to the NDK family.</text>
</comment>
<keyword id="KW-0002">3D-structure</keyword>
<keyword id="KW-0025">Alternative splicing</keyword>
<keyword id="KW-0966">Cell projection</keyword>
<keyword id="KW-0969">Cilium</keyword>
<keyword id="KW-0963">Cytoplasm</keyword>
<keyword id="KW-0206">Cytoskeleton</keyword>
<keyword id="KW-0217">Developmental protein</keyword>
<keyword id="KW-0221">Differentiation</keyword>
<keyword id="KW-0282">Flagellum</keyword>
<keyword id="KW-0378">Hydrolase</keyword>
<keyword id="KW-1185">Reference proteome</keyword>
<keyword id="KW-0744">Spermatogenesis</keyword>
<feature type="chain" id="PRO_0000137126" description="Nucleoside diphosphate kinase homolog 5">
    <location>
        <begin position="1"/>
        <end position="211"/>
    </location>
</feature>
<feature type="region of interest" description="NDK" evidence="8">
    <location>
        <begin position="13"/>
        <end position="145"/>
    </location>
</feature>
<feature type="splice variant" id="VSP_007773" description="In isoform 2." evidence="5 6">
    <original>LR</original>
    <variation>DY</variation>
    <location>
        <begin position="113"/>
        <end position="114"/>
    </location>
</feature>
<feature type="splice variant" id="VSP_007774" description="In isoform 2." evidence="5 6">
    <location>
        <begin position="115"/>
        <end position="211"/>
    </location>
</feature>
<feature type="sequence conflict" description="In Ref. 1; AAK20866." evidence="8" ref="1">
    <original>E</original>
    <variation>V</variation>
    <location>
        <position position="2"/>
    </location>
</feature>
<proteinExistence type="evidence at protein level"/>